<keyword id="KW-1003">Cell membrane</keyword>
<keyword id="KW-0378">Hydrolase</keyword>
<keyword id="KW-0472">Membrane</keyword>
<keyword id="KW-0479">Metal-binding</keyword>
<keyword id="KW-0482">Metalloprotease</keyword>
<keyword id="KW-0645">Protease</keyword>
<keyword id="KW-1185">Reference proteome</keyword>
<keyword id="KW-0812">Transmembrane</keyword>
<keyword id="KW-1133">Transmembrane helix</keyword>
<keyword id="KW-0862">Zinc</keyword>
<comment type="cofactor">
    <cofactor evidence="1">
        <name>Zn(2+)</name>
        <dbReference type="ChEBI" id="CHEBI:29105"/>
    </cofactor>
    <text evidence="1">Binds 1 zinc ion per subunit.</text>
</comment>
<comment type="subcellular location">
    <subcellularLocation>
        <location evidence="1">Cell membrane</location>
        <topology evidence="1">Multi-pass membrane protein</topology>
    </subcellularLocation>
</comment>
<comment type="similarity">
    <text evidence="1">Belongs to the peptidase M48B family.</text>
</comment>
<sequence length="317" mass="35616">MSLMSIRLKLSSLLMGIAIFAIGFGIIYAILYYIGLNIGAIALLMVLLPIFIIMDIVQWLFGPYMIGAVYRTHKLQPTEPEYNMLTSIVSEVARNNNIRMPEVYIAEVDMPNAFAYGSPIAGRRIAVTRGLLRILEPDEIKAVIGHEMGHLRHRDVEMLLAIGLIPTLIFYFGYTLLFSGERGRNAGGIVLLAIIAMAASFLFRFLILAFNRMRESYADVNSALTVDGGAEKLQTALAKIVAATGRTGRYTRRRRNTPSSSVTEMLFFSNPNQSANEDYRKLLEEWKTAKVSLFADFFSDHPHPAKRIQRLEKLKMS</sequence>
<evidence type="ECO:0000255" key="1">
    <source>
        <dbReference type="HAMAP-Rule" id="MF_00188"/>
    </source>
</evidence>
<gene>
    <name evidence="1" type="primary">htpX</name>
    <name type="ordered locus">Ta0861</name>
</gene>
<reference key="1">
    <citation type="journal article" date="2000" name="Nature">
        <title>The genome sequence of the thermoacidophilic scavenger Thermoplasma acidophilum.</title>
        <authorList>
            <person name="Ruepp A."/>
            <person name="Graml W."/>
            <person name="Santos-Martinez M.-L."/>
            <person name="Koretke K.K."/>
            <person name="Volker C."/>
            <person name="Mewes H.-W."/>
            <person name="Frishman D."/>
            <person name="Stocker S."/>
            <person name="Lupas A.N."/>
            <person name="Baumeister W."/>
        </authorList>
    </citation>
    <scope>NUCLEOTIDE SEQUENCE [LARGE SCALE GENOMIC DNA]</scope>
    <source>
        <strain>ATCC 25905 / DSM 1728 / JCM 9062 / NBRC 15155 / AMRC-C165</strain>
    </source>
</reference>
<protein>
    <recommendedName>
        <fullName evidence="1">Protease HtpX homolog</fullName>
        <ecNumber evidence="1">3.4.24.-</ecNumber>
    </recommendedName>
</protein>
<dbReference type="EC" id="3.4.24.-" evidence="1"/>
<dbReference type="EMBL" id="AL445065">
    <property type="protein sequence ID" value="CAC11990.1"/>
    <property type="molecule type" value="Genomic_DNA"/>
</dbReference>
<dbReference type="RefSeq" id="WP_010901271.1">
    <property type="nucleotide sequence ID" value="NC_002578.1"/>
</dbReference>
<dbReference type="FunCoup" id="Q9HJV2">
    <property type="interactions" value="57"/>
</dbReference>
<dbReference type="STRING" id="273075.gene:9572075"/>
<dbReference type="PaxDb" id="273075-Ta0861"/>
<dbReference type="EnsemblBacteria" id="CAC11990">
    <property type="protein sequence ID" value="CAC11990"/>
    <property type="gene ID" value="CAC11990"/>
</dbReference>
<dbReference type="KEGG" id="tac:Ta0861"/>
<dbReference type="eggNOG" id="arCOG01331">
    <property type="taxonomic scope" value="Archaea"/>
</dbReference>
<dbReference type="HOGENOM" id="CLU_042266_4_1_2"/>
<dbReference type="InParanoid" id="Q9HJV2"/>
<dbReference type="OrthoDB" id="28389at2157"/>
<dbReference type="Proteomes" id="UP000001024">
    <property type="component" value="Chromosome"/>
</dbReference>
<dbReference type="GO" id="GO:0005886">
    <property type="term" value="C:plasma membrane"/>
    <property type="evidence" value="ECO:0007669"/>
    <property type="project" value="UniProtKB-SubCell"/>
</dbReference>
<dbReference type="GO" id="GO:0004222">
    <property type="term" value="F:metalloendopeptidase activity"/>
    <property type="evidence" value="ECO:0007669"/>
    <property type="project" value="UniProtKB-UniRule"/>
</dbReference>
<dbReference type="GO" id="GO:0008270">
    <property type="term" value="F:zinc ion binding"/>
    <property type="evidence" value="ECO:0007669"/>
    <property type="project" value="UniProtKB-UniRule"/>
</dbReference>
<dbReference type="GO" id="GO:0006508">
    <property type="term" value="P:proteolysis"/>
    <property type="evidence" value="ECO:0007669"/>
    <property type="project" value="UniProtKB-KW"/>
</dbReference>
<dbReference type="CDD" id="cd07338">
    <property type="entry name" value="M48B_HtpX_like"/>
    <property type="match status" value="1"/>
</dbReference>
<dbReference type="Gene3D" id="3.30.2010.10">
    <property type="entry name" value="Metalloproteases ('zincins'), catalytic domain"/>
    <property type="match status" value="1"/>
</dbReference>
<dbReference type="HAMAP" id="MF_00188">
    <property type="entry name" value="Pept_M48_protease_HtpX"/>
    <property type="match status" value="1"/>
</dbReference>
<dbReference type="InterPro" id="IPR050083">
    <property type="entry name" value="HtpX_protease"/>
</dbReference>
<dbReference type="InterPro" id="IPR022919">
    <property type="entry name" value="Pept_M48_protease_HtpX"/>
</dbReference>
<dbReference type="InterPro" id="IPR001915">
    <property type="entry name" value="Peptidase_M48"/>
</dbReference>
<dbReference type="NCBIfam" id="NF002322">
    <property type="entry name" value="PRK01265.1"/>
    <property type="match status" value="1"/>
</dbReference>
<dbReference type="PANTHER" id="PTHR43221">
    <property type="entry name" value="PROTEASE HTPX"/>
    <property type="match status" value="1"/>
</dbReference>
<dbReference type="PANTHER" id="PTHR43221:SF2">
    <property type="entry name" value="PROTEASE HTPX HOMOLOG"/>
    <property type="match status" value="1"/>
</dbReference>
<dbReference type="Pfam" id="PF01435">
    <property type="entry name" value="Peptidase_M48"/>
    <property type="match status" value="1"/>
</dbReference>
<accession>Q9HJV2</accession>
<organism>
    <name type="scientific">Thermoplasma acidophilum (strain ATCC 25905 / DSM 1728 / JCM 9062 / NBRC 15155 / AMRC-C165)</name>
    <dbReference type="NCBI Taxonomy" id="273075"/>
    <lineage>
        <taxon>Archaea</taxon>
        <taxon>Methanobacteriati</taxon>
        <taxon>Thermoplasmatota</taxon>
        <taxon>Thermoplasmata</taxon>
        <taxon>Thermoplasmatales</taxon>
        <taxon>Thermoplasmataceae</taxon>
        <taxon>Thermoplasma</taxon>
    </lineage>
</organism>
<proteinExistence type="inferred from homology"/>
<name>HTPX_THEAC</name>
<feature type="chain" id="PRO_0000138934" description="Protease HtpX homolog">
    <location>
        <begin position="1"/>
        <end position="317"/>
    </location>
</feature>
<feature type="transmembrane region" description="Helical" evidence="1">
    <location>
        <begin position="14"/>
        <end position="34"/>
    </location>
</feature>
<feature type="transmembrane region" description="Helical" evidence="1">
    <location>
        <begin position="41"/>
        <end position="61"/>
    </location>
</feature>
<feature type="transmembrane region" description="Helical" evidence="1">
    <location>
        <begin position="158"/>
        <end position="178"/>
    </location>
</feature>
<feature type="transmembrane region" description="Helical" evidence="1">
    <location>
        <begin position="189"/>
        <end position="209"/>
    </location>
</feature>
<feature type="active site" evidence="1">
    <location>
        <position position="147"/>
    </location>
</feature>
<feature type="binding site" evidence="1">
    <location>
        <position position="146"/>
    </location>
    <ligand>
        <name>Zn(2+)</name>
        <dbReference type="ChEBI" id="CHEBI:29105"/>
        <note>catalytic</note>
    </ligand>
</feature>
<feature type="binding site" evidence="1">
    <location>
        <position position="150"/>
    </location>
    <ligand>
        <name>Zn(2+)</name>
        <dbReference type="ChEBI" id="CHEBI:29105"/>
        <note>catalytic</note>
    </ligand>
</feature>
<feature type="binding site" evidence="1">
    <location>
        <position position="215"/>
    </location>
    <ligand>
        <name>Zn(2+)</name>
        <dbReference type="ChEBI" id="CHEBI:29105"/>
        <note>catalytic</note>
    </ligand>
</feature>